<name>UXUA_BRUC2</name>
<comment type="function">
    <text evidence="1">Catalyzes the dehydration of D-mannonate.</text>
</comment>
<comment type="catalytic activity">
    <reaction evidence="1">
        <text>D-mannonate = 2-dehydro-3-deoxy-D-gluconate + H2O</text>
        <dbReference type="Rhea" id="RHEA:20097"/>
        <dbReference type="ChEBI" id="CHEBI:15377"/>
        <dbReference type="ChEBI" id="CHEBI:17767"/>
        <dbReference type="ChEBI" id="CHEBI:57990"/>
        <dbReference type="EC" id="4.2.1.8"/>
    </reaction>
</comment>
<comment type="cofactor">
    <cofactor evidence="1">
        <name>Fe(2+)</name>
        <dbReference type="ChEBI" id="CHEBI:29033"/>
    </cofactor>
    <cofactor evidence="1">
        <name>Mn(2+)</name>
        <dbReference type="ChEBI" id="CHEBI:29035"/>
    </cofactor>
</comment>
<comment type="pathway">
    <text evidence="1">Carbohydrate metabolism; pentose and glucuronate interconversion.</text>
</comment>
<comment type="similarity">
    <text evidence="1">Belongs to the mannonate dehydratase family.</text>
</comment>
<evidence type="ECO:0000255" key="1">
    <source>
        <dbReference type="HAMAP-Rule" id="MF_00106"/>
    </source>
</evidence>
<feature type="chain" id="PRO_1000075896" description="Mannonate dehydratase">
    <location>
        <begin position="1"/>
        <end position="401"/>
    </location>
</feature>
<gene>
    <name evidence="1" type="primary">uxuA</name>
    <name type="ordered locus">BCAN_B0829</name>
</gene>
<dbReference type="EC" id="4.2.1.8" evidence="1"/>
<dbReference type="EMBL" id="CP000873">
    <property type="protein sequence ID" value="ABX63988.1"/>
    <property type="molecule type" value="Genomic_DNA"/>
</dbReference>
<dbReference type="RefSeq" id="WP_004690313.1">
    <property type="nucleotide sequence ID" value="NC_010104.1"/>
</dbReference>
<dbReference type="SMR" id="A9MCA1"/>
<dbReference type="GeneID" id="97535099"/>
<dbReference type="KEGG" id="bcs:BCAN_B0829"/>
<dbReference type="HOGENOM" id="CLU_058621_2_0_5"/>
<dbReference type="PhylomeDB" id="A9MCA1"/>
<dbReference type="UniPathway" id="UPA00246"/>
<dbReference type="Proteomes" id="UP000001385">
    <property type="component" value="Chromosome II"/>
</dbReference>
<dbReference type="GO" id="GO:0008198">
    <property type="term" value="F:ferrous iron binding"/>
    <property type="evidence" value="ECO:0007669"/>
    <property type="project" value="TreeGrafter"/>
</dbReference>
<dbReference type="GO" id="GO:0030145">
    <property type="term" value="F:manganese ion binding"/>
    <property type="evidence" value="ECO:0007669"/>
    <property type="project" value="TreeGrafter"/>
</dbReference>
<dbReference type="GO" id="GO:0008927">
    <property type="term" value="F:mannonate dehydratase activity"/>
    <property type="evidence" value="ECO:0007669"/>
    <property type="project" value="UniProtKB-UniRule"/>
</dbReference>
<dbReference type="GO" id="GO:0042840">
    <property type="term" value="P:D-glucuronate catabolic process"/>
    <property type="evidence" value="ECO:0007669"/>
    <property type="project" value="TreeGrafter"/>
</dbReference>
<dbReference type="Gene3D" id="3.20.20.150">
    <property type="entry name" value="Divalent-metal-dependent TIM barrel enzymes"/>
    <property type="match status" value="1"/>
</dbReference>
<dbReference type="HAMAP" id="MF_00106">
    <property type="entry name" value="UxuA"/>
    <property type="match status" value="1"/>
</dbReference>
<dbReference type="InterPro" id="IPR004628">
    <property type="entry name" value="Man_deHydtase"/>
</dbReference>
<dbReference type="InterPro" id="IPR036237">
    <property type="entry name" value="Xyl_isomerase-like_sf"/>
</dbReference>
<dbReference type="NCBIfam" id="NF003027">
    <property type="entry name" value="PRK03906.1"/>
    <property type="match status" value="1"/>
</dbReference>
<dbReference type="NCBIfam" id="TIGR00695">
    <property type="entry name" value="uxuA"/>
    <property type="match status" value="1"/>
</dbReference>
<dbReference type="PANTHER" id="PTHR30387">
    <property type="entry name" value="MANNONATE DEHYDRATASE"/>
    <property type="match status" value="1"/>
</dbReference>
<dbReference type="PANTHER" id="PTHR30387:SF2">
    <property type="entry name" value="MANNONATE DEHYDRATASE"/>
    <property type="match status" value="1"/>
</dbReference>
<dbReference type="Pfam" id="PF03786">
    <property type="entry name" value="UxuA"/>
    <property type="match status" value="1"/>
</dbReference>
<dbReference type="PIRSF" id="PIRSF016049">
    <property type="entry name" value="Man_dehyd"/>
    <property type="match status" value="1"/>
</dbReference>
<dbReference type="SUPFAM" id="SSF51658">
    <property type="entry name" value="Xylose isomerase-like"/>
    <property type="match status" value="1"/>
</dbReference>
<protein>
    <recommendedName>
        <fullName evidence="1">Mannonate dehydratase</fullName>
        <ecNumber evidence="1">4.2.1.8</ecNumber>
    </recommendedName>
    <alternativeName>
        <fullName evidence="1">D-mannonate hydro-lyase</fullName>
    </alternativeName>
</protein>
<sequence length="401" mass="44445">MRQAWRWFGPEAGVPLDAVRQAGATDIVSALHEVPIGQEWTSAQIVERKNLIESTPTGRHPLTWSVVESIPVSDDIKRSGKAARHDIGAWIASMEALARNDIKVICYNFMPVVDWCRTDLDYITSTGATAMRFDQDRFAAFDLHILQRKGAEKDYSEEDRIAARAIFEAMDETEIEQLIVNIASALPGSTTEPLTIPAFREKLETYASIDAAHLRRNLVEFLEAVTPVADSLGVKLTLHPDDPPRSLFGLPRIASTEADYAAIFAAVPAQSNGMCFCTGSLGVRADNDLPAIARRFASRIHFSHLRATTREGDGRTFHEAAHLEGDVDMVGILRILLEEDRKRDAGQTIIFRSDHGHRMMDDLEKKVTPGYPVIGRMRGLAELRGIITALDACALEYDPNV</sequence>
<keyword id="KW-0408">Iron</keyword>
<keyword id="KW-0456">Lyase</keyword>
<keyword id="KW-0464">Manganese</keyword>
<keyword id="KW-1185">Reference proteome</keyword>
<proteinExistence type="inferred from homology"/>
<accession>A9MCA1</accession>
<reference key="1">
    <citation type="submission" date="2007-10" db="EMBL/GenBank/DDBJ databases">
        <title>Brucella canis ATCC 23365 whole genome shotgun sequencing project.</title>
        <authorList>
            <person name="Setubal J.C."/>
            <person name="Bowns C."/>
            <person name="Boyle S."/>
            <person name="Crasta O.R."/>
            <person name="Czar M.J."/>
            <person name="Dharmanolla C."/>
            <person name="Gillespie J.J."/>
            <person name="Kenyon R.W."/>
            <person name="Lu J."/>
            <person name="Mane S."/>
            <person name="Mohapatra S."/>
            <person name="Nagrani S."/>
            <person name="Purkayastha A."/>
            <person name="Rajasimha H.K."/>
            <person name="Shallom J.M."/>
            <person name="Shallom S."/>
            <person name="Shukla M."/>
            <person name="Snyder E.E."/>
            <person name="Sobral B.W."/>
            <person name="Wattam A.R."/>
            <person name="Will R."/>
            <person name="Williams K."/>
            <person name="Yoo H."/>
            <person name="Bruce D."/>
            <person name="Detter C."/>
            <person name="Munk C."/>
            <person name="Brettin T.S."/>
        </authorList>
    </citation>
    <scope>NUCLEOTIDE SEQUENCE [LARGE SCALE GENOMIC DNA]</scope>
    <source>
        <strain>ATCC 23365 / NCTC 10854 / RM-666</strain>
    </source>
</reference>
<organism>
    <name type="scientific">Brucella canis (strain ATCC 23365 / NCTC 10854 / RM-666)</name>
    <dbReference type="NCBI Taxonomy" id="483179"/>
    <lineage>
        <taxon>Bacteria</taxon>
        <taxon>Pseudomonadati</taxon>
        <taxon>Pseudomonadota</taxon>
        <taxon>Alphaproteobacteria</taxon>
        <taxon>Hyphomicrobiales</taxon>
        <taxon>Brucellaceae</taxon>
        <taxon>Brucella/Ochrobactrum group</taxon>
        <taxon>Brucella</taxon>
    </lineage>
</organism>